<reference key="1">
    <citation type="journal article" date="1992" name="Nucleic Acids Res.">
        <title>Systematic sequencing of the Escherichia coli genome: analysis of the 0-2.4 min region.</title>
        <authorList>
            <person name="Yura T."/>
            <person name="Mori H."/>
            <person name="Nagai H."/>
            <person name="Nagata T."/>
            <person name="Ishihama A."/>
            <person name="Fujita N."/>
            <person name="Isono K."/>
            <person name="Mizobuchi K."/>
            <person name="Nakata A."/>
        </authorList>
    </citation>
    <scope>NUCLEOTIDE SEQUENCE [LARGE SCALE GENOMIC DNA]</scope>
    <source>
        <strain>K12</strain>
    </source>
</reference>
<reference key="2">
    <citation type="journal article" date="1997" name="Science">
        <title>The complete genome sequence of Escherichia coli K-12.</title>
        <authorList>
            <person name="Blattner F.R."/>
            <person name="Plunkett G. III"/>
            <person name="Bloch C.A."/>
            <person name="Perna N.T."/>
            <person name="Burland V."/>
            <person name="Riley M."/>
            <person name="Collado-Vides J."/>
            <person name="Glasner J.D."/>
            <person name="Rode C.K."/>
            <person name="Mayhew G.F."/>
            <person name="Gregor J."/>
            <person name="Davis N.W."/>
            <person name="Kirkpatrick H.A."/>
            <person name="Goeden M.A."/>
            <person name="Rose D.J."/>
            <person name="Mau B."/>
            <person name="Shao Y."/>
        </authorList>
    </citation>
    <scope>NUCLEOTIDE SEQUENCE [LARGE SCALE GENOMIC DNA]</scope>
    <source>
        <strain>K12 / MG1655 / ATCC 47076</strain>
    </source>
</reference>
<reference key="3">
    <citation type="journal article" date="2006" name="Mol. Syst. Biol.">
        <title>Highly accurate genome sequences of Escherichia coli K-12 strains MG1655 and W3110.</title>
        <authorList>
            <person name="Hayashi K."/>
            <person name="Morooka N."/>
            <person name="Yamamoto Y."/>
            <person name="Fujita K."/>
            <person name="Isono K."/>
            <person name="Choi S."/>
            <person name="Ohtsubo E."/>
            <person name="Baba T."/>
            <person name="Wanner B.L."/>
            <person name="Mori H."/>
            <person name="Horiuchi T."/>
        </authorList>
    </citation>
    <scope>NUCLEOTIDE SEQUENCE [LARGE SCALE GENOMIC DNA]</scope>
    <source>
        <strain>K12 / W3110 / ATCC 27325 / DSM 5911</strain>
    </source>
</reference>
<protein>
    <recommendedName>
        <fullName>Uncharacterized protein YaaX</fullName>
    </recommendedName>
</protein>
<feature type="signal peptide" evidence="1">
    <location>
        <begin position="1"/>
        <end position="23"/>
    </location>
</feature>
<feature type="chain" id="PRO_0000013779" description="Uncharacterized protein YaaX">
    <location>
        <begin position="24"/>
        <end position="98"/>
    </location>
</feature>
<feature type="region of interest" description="Disordered" evidence="2">
    <location>
        <begin position="68"/>
        <end position="98"/>
    </location>
</feature>
<feature type="compositionally biased region" description="Basic residues" evidence="2">
    <location>
        <begin position="77"/>
        <end position="98"/>
    </location>
</feature>
<name>YAAX_ECOLI</name>
<comment type="similarity">
    <text evidence="3">To E.coli YpeC.</text>
</comment>
<accession>P75616</accession>
<proteinExistence type="inferred from homology"/>
<gene>
    <name type="primary">yaaX</name>
    <name type="ordered locus">b0005</name>
    <name type="ordered locus">JW0004</name>
</gene>
<organism>
    <name type="scientific">Escherichia coli (strain K12)</name>
    <dbReference type="NCBI Taxonomy" id="83333"/>
    <lineage>
        <taxon>Bacteria</taxon>
        <taxon>Pseudomonadati</taxon>
        <taxon>Pseudomonadota</taxon>
        <taxon>Gammaproteobacteria</taxon>
        <taxon>Enterobacterales</taxon>
        <taxon>Enterobacteriaceae</taxon>
        <taxon>Escherichia</taxon>
    </lineage>
</organism>
<dbReference type="EMBL" id="U00096">
    <property type="protein sequence ID" value="AAC73116.1"/>
    <property type="molecule type" value="Genomic_DNA"/>
</dbReference>
<dbReference type="EMBL" id="AP009048">
    <property type="protein sequence ID" value="BAB96582.1"/>
    <property type="molecule type" value="Genomic_DNA"/>
</dbReference>
<dbReference type="PIR" id="E64720">
    <property type="entry name" value="E64720"/>
</dbReference>
<dbReference type="RefSeq" id="NP_414546.1">
    <property type="nucleotide sequence ID" value="NC_000913.3"/>
</dbReference>
<dbReference type="RefSeq" id="WP_000738719.1">
    <property type="nucleotide sequence ID" value="NZ_LN832404.1"/>
</dbReference>
<dbReference type="BioGRID" id="4261936">
    <property type="interactions" value="18"/>
</dbReference>
<dbReference type="FunCoup" id="P75616">
    <property type="interactions" value="30"/>
</dbReference>
<dbReference type="IntAct" id="P75616">
    <property type="interactions" value="4"/>
</dbReference>
<dbReference type="STRING" id="511145.b0005"/>
<dbReference type="PaxDb" id="511145-b0005"/>
<dbReference type="EnsemblBacteria" id="AAC73116">
    <property type="protein sequence ID" value="AAC73116"/>
    <property type="gene ID" value="b0005"/>
</dbReference>
<dbReference type="GeneID" id="944747"/>
<dbReference type="KEGG" id="ecj:JW0004"/>
<dbReference type="KEGG" id="eco:b0005"/>
<dbReference type="KEGG" id="ecoc:C3026_00030"/>
<dbReference type="PATRIC" id="fig|511145.12.peg.4"/>
<dbReference type="EchoBASE" id="EB4127"/>
<dbReference type="eggNOG" id="ENOG5032XJS">
    <property type="taxonomic scope" value="Bacteria"/>
</dbReference>
<dbReference type="HOGENOM" id="CLU_135700_2_1_6"/>
<dbReference type="InParanoid" id="P75616"/>
<dbReference type="OMA" id="DGPPGHW"/>
<dbReference type="BioCyc" id="EcoCyc:G6081-MONOMER"/>
<dbReference type="PRO" id="PR:P75616"/>
<dbReference type="Proteomes" id="UP000000625">
    <property type="component" value="Chromosome"/>
</dbReference>
<dbReference type="InterPro" id="IPR019638">
    <property type="entry name" value="DUF2502"/>
</dbReference>
<dbReference type="Pfam" id="PF10697">
    <property type="entry name" value="DUF2502"/>
    <property type="match status" value="1"/>
</dbReference>
<sequence>MKKMQSIVLALSLVLVAPMAAQAAEITLVPSVKLQIGDRDNRGYYWDGGHWRDHGWWKQHYEWRGNRWHLHGPPPPPRHHKKAPHDHHGGHGPGKHHR</sequence>
<keyword id="KW-1185">Reference proteome</keyword>
<keyword id="KW-0732">Signal</keyword>
<evidence type="ECO:0000255" key="1"/>
<evidence type="ECO:0000256" key="2">
    <source>
        <dbReference type="SAM" id="MobiDB-lite"/>
    </source>
</evidence>
<evidence type="ECO:0000305" key="3"/>